<gene>
    <name evidence="1" type="primary">gatC</name>
    <name type="ordered locus">Psyr_4164</name>
</gene>
<name>GATC_PSEU2</name>
<accession>Q4ZNS8</accession>
<comment type="function">
    <text evidence="1">Allows the formation of correctly charged Asn-tRNA(Asn) or Gln-tRNA(Gln) through the transamidation of misacylated Asp-tRNA(Asn) or Glu-tRNA(Gln) in organisms which lack either or both of asparaginyl-tRNA or glutaminyl-tRNA synthetases. The reaction takes place in the presence of glutamine and ATP through an activated phospho-Asp-tRNA(Asn) or phospho-Glu-tRNA(Gln).</text>
</comment>
<comment type="catalytic activity">
    <reaction evidence="1">
        <text>L-glutamyl-tRNA(Gln) + L-glutamine + ATP + H2O = L-glutaminyl-tRNA(Gln) + L-glutamate + ADP + phosphate + H(+)</text>
        <dbReference type="Rhea" id="RHEA:17521"/>
        <dbReference type="Rhea" id="RHEA-COMP:9681"/>
        <dbReference type="Rhea" id="RHEA-COMP:9684"/>
        <dbReference type="ChEBI" id="CHEBI:15377"/>
        <dbReference type="ChEBI" id="CHEBI:15378"/>
        <dbReference type="ChEBI" id="CHEBI:29985"/>
        <dbReference type="ChEBI" id="CHEBI:30616"/>
        <dbReference type="ChEBI" id="CHEBI:43474"/>
        <dbReference type="ChEBI" id="CHEBI:58359"/>
        <dbReference type="ChEBI" id="CHEBI:78520"/>
        <dbReference type="ChEBI" id="CHEBI:78521"/>
        <dbReference type="ChEBI" id="CHEBI:456216"/>
    </reaction>
</comment>
<comment type="catalytic activity">
    <reaction evidence="1">
        <text>L-aspartyl-tRNA(Asn) + L-glutamine + ATP + H2O = L-asparaginyl-tRNA(Asn) + L-glutamate + ADP + phosphate + 2 H(+)</text>
        <dbReference type="Rhea" id="RHEA:14513"/>
        <dbReference type="Rhea" id="RHEA-COMP:9674"/>
        <dbReference type="Rhea" id="RHEA-COMP:9677"/>
        <dbReference type="ChEBI" id="CHEBI:15377"/>
        <dbReference type="ChEBI" id="CHEBI:15378"/>
        <dbReference type="ChEBI" id="CHEBI:29985"/>
        <dbReference type="ChEBI" id="CHEBI:30616"/>
        <dbReference type="ChEBI" id="CHEBI:43474"/>
        <dbReference type="ChEBI" id="CHEBI:58359"/>
        <dbReference type="ChEBI" id="CHEBI:78515"/>
        <dbReference type="ChEBI" id="CHEBI:78516"/>
        <dbReference type="ChEBI" id="CHEBI:456216"/>
    </reaction>
</comment>
<comment type="subunit">
    <text evidence="1">Heterotrimer of A, B and C subunits.</text>
</comment>
<comment type="similarity">
    <text evidence="1">Belongs to the GatC family.</text>
</comment>
<protein>
    <recommendedName>
        <fullName evidence="1">Aspartyl/glutamyl-tRNA(Asn/Gln) amidotransferase subunit C</fullName>
        <shortName evidence="1">Asp/Glu-ADT subunit C</shortName>
        <ecNumber evidence="1">6.3.5.-</ecNumber>
    </recommendedName>
</protein>
<sequence length="95" mass="10503">MALERSDVEKIAHLARLGLNDADIPRTTEALNSILGLVDQMQAVDTTGIEPLAHPLEATQRLREDAVTERNRRDTYQAIAPAVQDGLYLVPKVIE</sequence>
<organism>
    <name type="scientific">Pseudomonas syringae pv. syringae (strain B728a)</name>
    <dbReference type="NCBI Taxonomy" id="205918"/>
    <lineage>
        <taxon>Bacteria</taxon>
        <taxon>Pseudomonadati</taxon>
        <taxon>Pseudomonadota</taxon>
        <taxon>Gammaproteobacteria</taxon>
        <taxon>Pseudomonadales</taxon>
        <taxon>Pseudomonadaceae</taxon>
        <taxon>Pseudomonas</taxon>
        <taxon>Pseudomonas syringae</taxon>
    </lineage>
</organism>
<proteinExistence type="inferred from homology"/>
<evidence type="ECO:0000255" key="1">
    <source>
        <dbReference type="HAMAP-Rule" id="MF_00122"/>
    </source>
</evidence>
<dbReference type="EC" id="6.3.5.-" evidence="1"/>
<dbReference type="EMBL" id="CP000075">
    <property type="protein sequence ID" value="AAY39194.1"/>
    <property type="molecule type" value="Genomic_DNA"/>
</dbReference>
<dbReference type="RefSeq" id="WP_002555109.1">
    <property type="nucleotide sequence ID" value="NC_007005.1"/>
</dbReference>
<dbReference type="RefSeq" id="YP_237232.1">
    <property type="nucleotide sequence ID" value="NC_007005.1"/>
</dbReference>
<dbReference type="SMR" id="Q4ZNS8"/>
<dbReference type="STRING" id="205918.Psyr_4164"/>
<dbReference type="GeneID" id="96220644"/>
<dbReference type="KEGG" id="psb:Psyr_4164"/>
<dbReference type="PATRIC" id="fig|205918.7.peg.4290"/>
<dbReference type="eggNOG" id="COG0721">
    <property type="taxonomic scope" value="Bacteria"/>
</dbReference>
<dbReference type="HOGENOM" id="CLU_105899_2_2_6"/>
<dbReference type="OrthoDB" id="9794326at2"/>
<dbReference type="Proteomes" id="UP000000426">
    <property type="component" value="Chromosome"/>
</dbReference>
<dbReference type="GO" id="GO:0050566">
    <property type="term" value="F:asparaginyl-tRNA synthase (glutamine-hydrolyzing) activity"/>
    <property type="evidence" value="ECO:0007669"/>
    <property type="project" value="RHEA"/>
</dbReference>
<dbReference type="GO" id="GO:0005524">
    <property type="term" value="F:ATP binding"/>
    <property type="evidence" value="ECO:0007669"/>
    <property type="project" value="UniProtKB-KW"/>
</dbReference>
<dbReference type="GO" id="GO:0050567">
    <property type="term" value="F:glutaminyl-tRNA synthase (glutamine-hydrolyzing) activity"/>
    <property type="evidence" value="ECO:0007669"/>
    <property type="project" value="UniProtKB-UniRule"/>
</dbReference>
<dbReference type="GO" id="GO:0070681">
    <property type="term" value="P:glutaminyl-tRNAGln biosynthesis via transamidation"/>
    <property type="evidence" value="ECO:0007669"/>
    <property type="project" value="TreeGrafter"/>
</dbReference>
<dbReference type="GO" id="GO:0006450">
    <property type="term" value="P:regulation of translational fidelity"/>
    <property type="evidence" value="ECO:0007669"/>
    <property type="project" value="InterPro"/>
</dbReference>
<dbReference type="GO" id="GO:0006412">
    <property type="term" value="P:translation"/>
    <property type="evidence" value="ECO:0007669"/>
    <property type="project" value="UniProtKB-UniRule"/>
</dbReference>
<dbReference type="Gene3D" id="1.10.20.60">
    <property type="entry name" value="Glu-tRNAGln amidotransferase C subunit, N-terminal domain"/>
    <property type="match status" value="1"/>
</dbReference>
<dbReference type="HAMAP" id="MF_00122">
    <property type="entry name" value="GatC"/>
    <property type="match status" value="1"/>
</dbReference>
<dbReference type="InterPro" id="IPR036113">
    <property type="entry name" value="Asp/Glu-ADT_sf_sub_c"/>
</dbReference>
<dbReference type="InterPro" id="IPR003837">
    <property type="entry name" value="GatC"/>
</dbReference>
<dbReference type="NCBIfam" id="TIGR00135">
    <property type="entry name" value="gatC"/>
    <property type="match status" value="1"/>
</dbReference>
<dbReference type="PANTHER" id="PTHR15004">
    <property type="entry name" value="GLUTAMYL-TRNA(GLN) AMIDOTRANSFERASE SUBUNIT C, MITOCHONDRIAL"/>
    <property type="match status" value="1"/>
</dbReference>
<dbReference type="PANTHER" id="PTHR15004:SF0">
    <property type="entry name" value="GLUTAMYL-TRNA(GLN) AMIDOTRANSFERASE SUBUNIT C, MITOCHONDRIAL"/>
    <property type="match status" value="1"/>
</dbReference>
<dbReference type="Pfam" id="PF02686">
    <property type="entry name" value="GatC"/>
    <property type="match status" value="1"/>
</dbReference>
<dbReference type="SUPFAM" id="SSF141000">
    <property type="entry name" value="Glu-tRNAGln amidotransferase C subunit"/>
    <property type="match status" value="1"/>
</dbReference>
<feature type="chain" id="PRO_1000016185" description="Aspartyl/glutamyl-tRNA(Asn/Gln) amidotransferase subunit C">
    <location>
        <begin position="1"/>
        <end position="95"/>
    </location>
</feature>
<reference key="1">
    <citation type="journal article" date="2005" name="Proc. Natl. Acad. Sci. U.S.A.">
        <title>Comparison of the complete genome sequences of Pseudomonas syringae pv. syringae B728a and pv. tomato DC3000.</title>
        <authorList>
            <person name="Feil H."/>
            <person name="Feil W.S."/>
            <person name="Chain P."/>
            <person name="Larimer F."/>
            <person name="Dibartolo G."/>
            <person name="Copeland A."/>
            <person name="Lykidis A."/>
            <person name="Trong S."/>
            <person name="Nolan M."/>
            <person name="Goltsman E."/>
            <person name="Thiel J."/>
            <person name="Malfatti S."/>
            <person name="Loper J.E."/>
            <person name="Lapidus A."/>
            <person name="Detter J.C."/>
            <person name="Land M."/>
            <person name="Richardson P.M."/>
            <person name="Kyrpides N.C."/>
            <person name="Ivanova N."/>
            <person name="Lindow S.E."/>
        </authorList>
    </citation>
    <scope>NUCLEOTIDE SEQUENCE [LARGE SCALE GENOMIC DNA]</scope>
    <source>
        <strain>B728a</strain>
    </source>
</reference>
<keyword id="KW-0067">ATP-binding</keyword>
<keyword id="KW-0436">Ligase</keyword>
<keyword id="KW-0547">Nucleotide-binding</keyword>
<keyword id="KW-0648">Protein biosynthesis</keyword>